<accession>Q65RB8</accession>
<organism>
    <name type="scientific">Mannheimia succiniciproducens (strain KCTC 0769BP / MBEL55E)</name>
    <dbReference type="NCBI Taxonomy" id="221988"/>
    <lineage>
        <taxon>Bacteria</taxon>
        <taxon>Pseudomonadati</taxon>
        <taxon>Pseudomonadota</taxon>
        <taxon>Gammaproteobacteria</taxon>
        <taxon>Pasteurellales</taxon>
        <taxon>Pasteurellaceae</taxon>
        <taxon>Basfia</taxon>
    </lineage>
</organism>
<protein>
    <recommendedName>
        <fullName evidence="1">Imidazole glycerol phosphate synthase subunit HisH</fullName>
        <ecNumber evidence="1">4.3.2.10</ecNumber>
    </recommendedName>
    <alternativeName>
        <fullName evidence="1">IGP synthase glutaminase subunit</fullName>
        <ecNumber evidence="1">3.5.1.2</ecNumber>
    </alternativeName>
    <alternativeName>
        <fullName evidence="1">IGP synthase subunit HisH</fullName>
    </alternativeName>
    <alternativeName>
        <fullName evidence="1">ImGP synthase subunit HisH</fullName>
        <shortName evidence="1">IGPS subunit HisH</shortName>
    </alternativeName>
</protein>
<evidence type="ECO:0000255" key="1">
    <source>
        <dbReference type="HAMAP-Rule" id="MF_00278"/>
    </source>
</evidence>
<reference key="1">
    <citation type="journal article" date="2004" name="Nat. Biotechnol.">
        <title>The genome sequence of the capnophilic rumen bacterium Mannheimia succiniciproducens.</title>
        <authorList>
            <person name="Hong S.H."/>
            <person name="Kim J.S."/>
            <person name="Lee S.Y."/>
            <person name="In Y.H."/>
            <person name="Choi S.S."/>
            <person name="Rih J.-K."/>
            <person name="Kim C.H."/>
            <person name="Jeong H."/>
            <person name="Hur C.G."/>
            <person name="Kim J.J."/>
        </authorList>
    </citation>
    <scope>NUCLEOTIDE SEQUENCE [LARGE SCALE GENOMIC DNA]</scope>
    <source>
        <strain>KCTC 0769BP / MBEL55E</strain>
    </source>
</reference>
<name>HIS5_MANSM</name>
<gene>
    <name evidence="1" type="primary">hisH</name>
    <name type="ordered locus">MS1885</name>
</gene>
<comment type="function">
    <text evidence="1">IGPS catalyzes the conversion of PRFAR and glutamine to IGP, AICAR and glutamate. The HisH subunit catalyzes the hydrolysis of glutamine to glutamate and ammonia as part of the synthesis of IGP and AICAR. The resulting ammonia molecule is channeled to the active site of HisF.</text>
</comment>
<comment type="catalytic activity">
    <reaction evidence="1">
        <text>5-[(5-phospho-1-deoxy-D-ribulos-1-ylimino)methylamino]-1-(5-phospho-beta-D-ribosyl)imidazole-4-carboxamide + L-glutamine = D-erythro-1-(imidazol-4-yl)glycerol 3-phosphate + 5-amino-1-(5-phospho-beta-D-ribosyl)imidazole-4-carboxamide + L-glutamate + H(+)</text>
        <dbReference type="Rhea" id="RHEA:24793"/>
        <dbReference type="ChEBI" id="CHEBI:15378"/>
        <dbReference type="ChEBI" id="CHEBI:29985"/>
        <dbReference type="ChEBI" id="CHEBI:58278"/>
        <dbReference type="ChEBI" id="CHEBI:58359"/>
        <dbReference type="ChEBI" id="CHEBI:58475"/>
        <dbReference type="ChEBI" id="CHEBI:58525"/>
        <dbReference type="EC" id="4.3.2.10"/>
    </reaction>
</comment>
<comment type="catalytic activity">
    <reaction evidence="1">
        <text>L-glutamine + H2O = L-glutamate + NH4(+)</text>
        <dbReference type="Rhea" id="RHEA:15889"/>
        <dbReference type="ChEBI" id="CHEBI:15377"/>
        <dbReference type="ChEBI" id="CHEBI:28938"/>
        <dbReference type="ChEBI" id="CHEBI:29985"/>
        <dbReference type="ChEBI" id="CHEBI:58359"/>
        <dbReference type="EC" id="3.5.1.2"/>
    </reaction>
</comment>
<comment type="pathway">
    <text evidence="1">Amino-acid biosynthesis; L-histidine biosynthesis; L-histidine from 5-phospho-alpha-D-ribose 1-diphosphate: step 5/9.</text>
</comment>
<comment type="subunit">
    <text evidence="1">Heterodimer of HisH and HisF.</text>
</comment>
<comment type="subcellular location">
    <subcellularLocation>
        <location evidence="1">Cytoplasm</location>
    </subcellularLocation>
</comment>
<proteinExistence type="inferred from homology"/>
<feature type="chain" id="PRO_0000152392" description="Imidazole glycerol phosphate synthase subunit HisH">
    <location>
        <begin position="1"/>
        <end position="194"/>
    </location>
</feature>
<feature type="domain" description="Glutamine amidotransferase type-1" evidence="1">
    <location>
        <begin position="1"/>
        <end position="194"/>
    </location>
</feature>
<feature type="active site" description="Nucleophile" evidence="1">
    <location>
        <position position="75"/>
    </location>
</feature>
<feature type="active site" evidence="1">
    <location>
        <position position="175"/>
    </location>
</feature>
<feature type="active site" evidence="1">
    <location>
        <position position="177"/>
    </location>
</feature>
<dbReference type="EC" id="4.3.2.10" evidence="1"/>
<dbReference type="EC" id="3.5.1.2" evidence="1"/>
<dbReference type="EMBL" id="AE016827">
    <property type="protein sequence ID" value="AAU38492.1"/>
    <property type="molecule type" value="Genomic_DNA"/>
</dbReference>
<dbReference type="RefSeq" id="WP_011201045.1">
    <property type="nucleotide sequence ID" value="NC_006300.1"/>
</dbReference>
<dbReference type="SMR" id="Q65RB8"/>
<dbReference type="STRING" id="221988.MS1885"/>
<dbReference type="KEGG" id="msu:MS1885"/>
<dbReference type="eggNOG" id="COG0118">
    <property type="taxonomic scope" value="Bacteria"/>
</dbReference>
<dbReference type="HOGENOM" id="CLU_071837_0_0_6"/>
<dbReference type="OrthoDB" id="9807137at2"/>
<dbReference type="UniPathway" id="UPA00031">
    <property type="reaction ID" value="UER00010"/>
</dbReference>
<dbReference type="Proteomes" id="UP000000607">
    <property type="component" value="Chromosome"/>
</dbReference>
<dbReference type="GO" id="GO:0005737">
    <property type="term" value="C:cytoplasm"/>
    <property type="evidence" value="ECO:0007669"/>
    <property type="project" value="UniProtKB-SubCell"/>
</dbReference>
<dbReference type="GO" id="GO:0004359">
    <property type="term" value="F:glutaminase activity"/>
    <property type="evidence" value="ECO:0007669"/>
    <property type="project" value="UniProtKB-EC"/>
</dbReference>
<dbReference type="GO" id="GO:0000107">
    <property type="term" value="F:imidazoleglycerol-phosphate synthase activity"/>
    <property type="evidence" value="ECO:0007669"/>
    <property type="project" value="UniProtKB-UniRule"/>
</dbReference>
<dbReference type="GO" id="GO:0016829">
    <property type="term" value="F:lyase activity"/>
    <property type="evidence" value="ECO:0007669"/>
    <property type="project" value="UniProtKB-KW"/>
</dbReference>
<dbReference type="GO" id="GO:0000105">
    <property type="term" value="P:L-histidine biosynthetic process"/>
    <property type="evidence" value="ECO:0007669"/>
    <property type="project" value="UniProtKB-UniRule"/>
</dbReference>
<dbReference type="CDD" id="cd01748">
    <property type="entry name" value="GATase1_IGP_Synthase"/>
    <property type="match status" value="1"/>
</dbReference>
<dbReference type="FunFam" id="3.40.50.880:FF:000009">
    <property type="entry name" value="Imidazole glycerol phosphate synthase subunit HisH"/>
    <property type="match status" value="1"/>
</dbReference>
<dbReference type="Gene3D" id="3.40.50.880">
    <property type="match status" value="1"/>
</dbReference>
<dbReference type="HAMAP" id="MF_00278">
    <property type="entry name" value="HisH"/>
    <property type="match status" value="1"/>
</dbReference>
<dbReference type="InterPro" id="IPR029062">
    <property type="entry name" value="Class_I_gatase-like"/>
</dbReference>
<dbReference type="InterPro" id="IPR017926">
    <property type="entry name" value="GATASE"/>
</dbReference>
<dbReference type="InterPro" id="IPR010139">
    <property type="entry name" value="Imidazole-glycPsynth_HisH"/>
</dbReference>
<dbReference type="NCBIfam" id="TIGR01855">
    <property type="entry name" value="IMP_synth_hisH"/>
    <property type="match status" value="1"/>
</dbReference>
<dbReference type="PANTHER" id="PTHR42701">
    <property type="entry name" value="IMIDAZOLE GLYCEROL PHOSPHATE SYNTHASE SUBUNIT HISH"/>
    <property type="match status" value="1"/>
</dbReference>
<dbReference type="PANTHER" id="PTHR42701:SF1">
    <property type="entry name" value="IMIDAZOLE GLYCEROL PHOSPHATE SYNTHASE SUBUNIT HISH"/>
    <property type="match status" value="1"/>
</dbReference>
<dbReference type="Pfam" id="PF00117">
    <property type="entry name" value="GATase"/>
    <property type="match status" value="1"/>
</dbReference>
<dbReference type="PIRSF" id="PIRSF000495">
    <property type="entry name" value="Amidotransf_hisH"/>
    <property type="match status" value="1"/>
</dbReference>
<dbReference type="SUPFAM" id="SSF52317">
    <property type="entry name" value="Class I glutamine amidotransferase-like"/>
    <property type="match status" value="1"/>
</dbReference>
<dbReference type="PROSITE" id="PS51273">
    <property type="entry name" value="GATASE_TYPE_1"/>
    <property type="match status" value="1"/>
</dbReference>
<sequence>MIIIDTGCANLSSVKFAFDRLNIKAEISRDIATIKSADKLLLPGVGTAMAAMKILQDRNLIETIQNATQPMLGICLGMQLMTEYSSEGNVPTLSLMSGHTDLIPNTGLPLPHMGWNKVRYEQDHPLFAGIEQDSHFYFVHSYAVLPNEHTIATSDYGVPFSAALGCKNFYGVQFHPERSGKNGAQLLKNFVENL</sequence>
<keyword id="KW-0028">Amino-acid biosynthesis</keyword>
<keyword id="KW-0963">Cytoplasm</keyword>
<keyword id="KW-0315">Glutamine amidotransferase</keyword>
<keyword id="KW-0368">Histidine biosynthesis</keyword>
<keyword id="KW-0378">Hydrolase</keyword>
<keyword id="KW-0456">Lyase</keyword>